<reference key="1">
    <citation type="journal article" date="1998" name="Science">
        <title>Complete genome sequence of Treponema pallidum, the syphilis spirochete.</title>
        <authorList>
            <person name="Fraser C.M."/>
            <person name="Norris S.J."/>
            <person name="Weinstock G.M."/>
            <person name="White O."/>
            <person name="Sutton G.G."/>
            <person name="Dodson R.J."/>
            <person name="Gwinn M.L."/>
            <person name="Hickey E.K."/>
            <person name="Clayton R.A."/>
            <person name="Ketchum K.A."/>
            <person name="Sodergren E."/>
            <person name="Hardham J.M."/>
            <person name="McLeod M.P."/>
            <person name="Salzberg S.L."/>
            <person name="Peterson J.D."/>
            <person name="Khalak H.G."/>
            <person name="Richardson D.L."/>
            <person name="Howell J.K."/>
            <person name="Chidambaram M."/>
            <person name="Utterback T.R."/>
            <person name="McDonald L.A."/>
            <person name="Artiach P."/>
            <person name="Bowman C."/>
            <person name="Cotton M.D."/>
            <person name="Fujii C."/>
            <person name="Garland S.A."/>
            <person name="Hatch B."/>
            <person name="Horst K."/>
            <person name="Roberts K.M."/>
            <person name="Sandusky M."/>
            <person name="Weidman J.F."/>
            <person name="Smith H.O."/>
            <person name="Venter J.C."/>
        </authorList>
    </citation>
    <scope>NUCLEOTIDE SEQUENCE [LARGE SCALE GENOMIC DNA]</scope>
    <source>
        <strain>Nichols</strain>
    </source>
</reference>
<evidence type="ECO:0000255" key="1"/>
<evidence type="ECO:0000305" key="2"/>
<protein>
    <recommendedName>
        <fullName>Uncharacterized protein TP_0335</fullName>
    </recommendedName>
</protein>
<feature type="chain" id="PRO_0000202238" description="Uncharacterized protein TP_0335">
    <location>
        <begin position="1"/>
        <end position="180"/>
    </location>
</feature>
<feature type="transmembrane region" description="Helical" evidence="1">
    <location>
        <begin position="37"/>
        <end position="59"/>
    </location>
</feature>
<feature type="transmembrane region" description="Helical" evidence="1">
    <location>
        <begin position="128"/>
        <end position="147"/>
    </location>
</feature>
<gene>
    <name type="ordered locus">TP_0335</name>
</gene>
<name>Y335_TREPA</name>
<organism>
    <name type="scientific">Treponema pallidum (strain Nichols)</name>
    <dbReference type="NCBI Taxonomy" id="243276"/>
    <lineage>
        <taxon>Bacteria</taxon>
        <taxon>Pseudomonadati</taxon>
        <taxon>Spirochaetota</taxon>
        <taxon>Spirochaetia</taxon>
        <taxon>Spirochaetales</taxon>
        <taxon>Treponemataceae</taxon>
        <taxon>Treponema</taxon>
    </lineage>
</organism>
<accession>O83355</accession>
<comment type="subcellular location">
    <subcellularLocation>
        <location evidence="2">Cell membrane</location>
        <topology evidence="2">Multi-pass membrane protein</topology>
    </subcellularLocation>
</comment>
<sequence length="180" mass="19219">MAITTAGDICALYPLCPILLHCSTLMHLSPLRNTPHVLHAAAAVTEYAFVLSTLVFPSFCFSLPSPFPFPEGEGGAFYVRLFLNALSEEVLFRAYIPERLCHHATSCTARACGEVLSVLLFALAHRPAGSATLFAGAAGAALRVLFVREKKRSGSRARASALCTAVHALWNAYAIAAAAR</sequence>
<proteinExistence type="predicted"/>
<dbReference type="EMBL" id="AE000520">
    <property type="protein sequence ID" value="AAC65328.1"/>
    <property type="molecule type" value="Genomic_DNA"/>
</dbReference>
<dbReference type="PIR" id="E71337">
    <property type="entry name" value="E71337"/>
</dbReference>
<dbReference type="RefSeq" id="WP_010881783.1">
    <property type="nucleotide sequence ID" value="NC_021490.2"/>
</dbReference>
<dbReference type="STRING" id="243276.TP_0335"/>
<dbReference type="EnsemblBacteria" id="AAC65328">
    <property type="protein sequence ID" value="AAC65328"/>
    <property type="gene ID" value="TP_0335"/>
</dbReference>
<dbReference type="KEGG" id="tpa:TP_0335"/>
<dbReference type="KEGG" id="tpw:TPANIC_0335"/>
<dbReference type="HOGENOM" id="CLU_1502848_0_0_12"/>
<dbReference type="Proteomes" id="UP000000811">
    <property type="component" value="Chromosome"/>
</dbReference>
<dbReference type="GO" id="GO:0005886">
    <property type="term" value="C:plasma membrane"/>
    <property type="evidence" value="ECO:0007669"/>
    <property type="project" value="UniProtKB-SubCell"/>
</dbReference>
<dbReference type="GO" id="GO:0004175">
    <property type="term" value="F:endopeptidase activity"/>
    <property type="evidence" value="ECO:0007669"/>
    <property type="project" value="UniProtKB-ARBA"/>
</dbReference>
<dbReference type="GO" id="GO:0080120">
    <property type="term" value="P:CAAX-box protein maturation"/>
    <property type="evidence" value="ECO:0007669"/>
    <property type="project" value="UniProtKB-ARBA"/>
</dbReference>
<dbReference type="InterPro" id="IPR003675">
    <property type="entry name" value="Rce1/LyrA-like_dom"/>
</dbReference>
<dbReference type="Pfam" id="PF02517">
    <property type="entry name" value="Rce1-like"/>
    <property type="match status" value="1"/>
</dbReference>
<keyword id="KW-1003">Cell membrane</keyword>
<keyword id="KW-0472">Membrane</keyword>
<keyword id="KW-1185">Reference proteome</keyword>
<keyword id="KW-0812">Transmembrane</keyword>
<keyword id="KW-1133">Transmembrane helix</keyword>